<protein>
    <recommendedName>
        <fullName evidence="1">ATP-dependent 6-phosphofructokinase</fullName>
        <shortName evidence="1">ATP-PFK</shortName>
        <shortName evidence="1">Phosphofructokinase</shortName>
        <ecNumber evidence="1">2.7.1.11</ecNumber>
    </recommendedName>
    <alternativeName>
        <fullName evidence="1">Phosphohexokinase</fullName>
    </alternativeName>
</protein>
<organism>
    <name type="scientific">Anoxybacillus flavithermus (strain DSM 21510 / WK1)</name>
    <dbReference type="NCBI Taxonomy" id="491915"/>
    <lineage>
        <taxon>Bacteria</taxon>
        <taxon>Bacillati</taxon>
        <taxon>Bacillota</taxon>
        <taxon>Bacilli</taxon>
        <taxon>Bacillales</taxon>
        <taxon>Anoxybacillaceae</taxon>
        <taxon>Anoxybacillus</taxon>
    </lineage>
</organism>
<evidence type="ECO:0000255" key="1">
    <source>
        <dbReference type="HAMAP-Rule" id="MF_00339"/>
    </source>
</evidence>
<name>PFKA_ANOFW</name>
<dbReference type="EC" id="2.7.1.11" evidence="1"/>
<dbReference type="EMBL" id="CP000922">
    <property type="protein sequence ID" value="ACJ32883.1"/>
    <property type="molecule type" value="Genomic_DNA"/>
</dbReference>
<dbReference type="RefSeq" id="WP_012574203.1">
    <property type="nucleotide sequence ID" value="NC_011567.1"/>
</dbReference>
<dbReference type="SMR" id="B7GGT1"/>
<dbReference type="STRING" id="491915.Aflv_0499"/>
<dbReference type="GeneID" id="7036756"/>
<dbReference type="KEGG" id="afl:Aflv_0499"/>
<dbReference type="PATRIC" id="fig|491915.6.peg.511"/>
<dbReference type="eggNOG" id="COG0205">
    <property type="taxonomic scope" value="Bacteria"/>
</dbReference>
<dbReference type="HOGENOM" id="CLU_020655_0_1_9"/>
<dbReference type="UniPathway" id="UPA00109">
    <property type="reaction ID" value="UER00182"/>
</dbReference>
<dbReference type="Proteomes" id="UP000000742">
    <property type="component" value="Chromosome"/>
</dbReference>
<dbReference type="GO" id="GO:0005945">
    <property type="term" value="C:6-phosphofructokinase complex"/>
    <property type="evidence" value="ECO:0007669"/>
    <property type="project" value="TreeGrafter"/>
</dbReference>
<dbReference type="GO" id="GO:0003872">
    <property type="term" value="F:6-phosphofructokinase activity"/>
    <property type="evidence" value="ECO:0007669"/>
    <property type="project" value="UniProtKB-UniRule"/>
</dbReference>
<dbReference type="GO" id="GO:0016208">
    <property type="term" value="F:AMP binding"/>
    <property type="evidence" value="ECO:0007669"/>
    <property type="project" value="TreeGrafter"/>
</dbReference>
<dbReference type="GO" id="GO:0005524">
    <property type="term" value="F:ATP binding"/>
    <property type="evidence" value="ECO:0007669"/>
    <property type="project" value="UniProtKB-KW"/>
</dbReference>
<dbReference type="GO" id="GO:0070095">
    <property type="term" value="F:fructose-6-phosphate binding"/>
    <property type="evidence" value="ECO:0007669"/>
    <property type="project" value="TreeGrafter"/>
</dbReference>
<dbReference type="GO" id="GO:0042802">
    <property type="term" value="F:identical protein binding"/>
    <property type="evidence" value="ECO:0007669"/>
    <property type="project" value="TreeGrafter"/>
</dbReference>
<dbReference type="GO" id="GO:0046872">
    <property type="term" value="F:metal ion binding"/>
    <property type="evidence" value="ECO:0007669"/>
    <property type="project" value="UniProtKB-KW"/>
</dbReference>
<dbReference type="GO" id="GO:0048029">
    <property type="term" value="F:monosaccharide binding"/>
    <property type="evidence" value="ECO:0007669"/>
    <property type="project" value="TreeGrafter"/>
</dbReference>
<dbReference type="GO" id="GO:0061621">
    <property type="term" value="P:canonical glycolysis"/>
    <property type="evidence" value="ECO:0007669"/>
    <property type="project" value="TreeGrafter"/>
</dbReference>
<dbReference type="GO" id="GO:0030388">
    <property type="term" value="P:fructose 1,6-bisphosphate metabolic process"/>
    <property type="evidence" value="ECO:0007669"/>
    <property type="project" value="TreeGrafter"/>
</dbReference>
<dbReference type="GO" id="GO:0006002">
    <property type="term" value="P:fructose 6-phosphate metabolic process"/>
    <property type="evidence" value="ECO:0007669"/>
    <property type="project" value="InterPro"/>
</dbReference>
<dbReference type="CDD" id="cd00763">
    <property type="entry name" value="Bacterial_PFK"/>
    <property type="match status" value="1"/>
</dbReference>
<dbReference type="FunFam" id="3.40.50.450:FF:000001">
    <property type="entry name" value="ATP-dependent 6-phosphofructokinase"/>
    <property type="match status" value="1"/>
</dbReference>
<dbReference type="FunFam" id="3.40.50.460:FF:000002">
    <property type="entry name" value="ATP-dependent 6-phosphofructokinase"/>
    <property type="match status" value="1"/>
</dbReference>
<dbReference type="Gene3D" id="3.40.50.450">
    <property type="match status" value="1"/>
</dbReference>
<dbReference type="Gene3D" id="3.40.50.460">
    <property type="entry name" value="Phosphofructokinase domain"/>
    <property type="match status" value="1"/>
</dbReference>
<dbReference type="HAMAP" id="MF_00339">
    <property type="entry name" value="Phosphofructokinase_I_B1"/>
    <property type="match status" value="1"/>
</dbReference>
<dbReference type="InterPro" id="IPR022953">
    <property type="entry name" value="ATP_PFK"/>
</dbReference>
<dbReference type="InterPro" id="IPR012003">
    <property type="entry name" value="ATP_PFK_prok-type"/>
</dbReference>
<dbReference type="InterPro" id="IPR012828">
    <property type="entry name" value="PFKA_ATP_prok"/>
</dbReference>
<dbReference type="InterPro" id="IPR015912">
    <property type="entry name" value="Phosphofructokinase_CS"/>
</dbReference>
<dbReference type="InterPro" id="IPR000023">
    <property type="entry name" value="Phosphofructokinase_dom"/>
</dbReference>
<dbReference type="InterPro" id="IPR035966">
    <property type="entry name" value="PKF_sf"/>
</dbReference>
<dbReference type="NCBIfam" id="TIGR02482">
    <property type="entry name" value="PFKA_ATP"/>
    <property type="match status" value="1"/>
</dbReference>
<dbReference type="NCBIfam" id="NF002872">
    <property type="entry name" value="PRK03202.1"/>
    <property type="match status" value="1"/>
</dbReference>
<dbReference type="PANTHER" id="PTHR13697:SF4">
    <property type="entry name" value="ATP-DEPENDENT 6-PHOSPHOFRUCTOKINASE"/>
    <property type="match status" value="1"/>
</dbReference>
<dbReference type="PANTHER" id="PTHR13697">
    <property type="entry name" value="PHOSPHOFRUCTOKINASE"/>
    <property type="match status" value="1"/>
</dbReference>
<dbReference type="Pfam" id="PF00365">
    <property type="entry name" value="PFK"/>
    <property type="match status" value="1"/>
</dbReference>
<dbReference type="PIRSF" id="PIRSF000532">
    <property type="entry name" value="ATP_PFK_prok"/>
    <property type="match status" value="1"/>
</dbReference>
<dbReference type="PRINTS" id="PR00476">
    <property type="entry name" value="PHFRCTKINASE"/>
</dbReference>
<dbReference type="SUPFAM" id="SSF53784">
    <property type="entry name" value="Phosphofructokinase"/>
    <property type="match status" value="1"/>
</dbReference>
<dbReference type="PROSITE" id="PS00433">
    <property type="entry name" value="PHOSPHOFRUCTOKINASE"/>
    <property type="match status" value="1"/>
</dbReference>
<comment type="function">
    <text evidence="1">Catalyzes the phosphorylation of D-fructose 6-phosphate to fructose 1,6-bisphosphate by ATP, the first committing step of glycolysis.</text>
</comment>
<comment type="catalytic activity">
    <reaction evidence="1">
        <text>beta-D-fructose 6-phosphate + ATP = beta-D-fructose 1,6-bisphosphate + ADP + H(+)</text>
        <dbReference type="Rhea" id="RHEA:16109"/>
        <dbReference type="ChEBI" id="CHEBI:15378"/>
        <dbReference type="ChEBI" id="CHEBI:30616"/>
        <dbReference type="ChEBI" id="CHEBI:32966"/>
        <dbReference type="ChEBI" id="CHEBI:57634"/>
        <dbReference type="ChEBI" id="CHEBI:456216"/>
        <dbReference type="EC" id="2.7.1.11"/>
    </reaction>
</comment>
<comment type="cofactor">
    <cofactor evidence="1">
        <name>Mg(2+)</name>
        <dbReference type="ChEBI" id="CHEBI:18420"/>
    </cofactor>
</comment>
<comment type="activity regulation">
    <text evidence="1">Allosterically activated by ADP and other diphosphonucleosides, and allosterically inhibited by phosphoenolpyruvate.</text>
</comment>
<comment type="pathway">
    <text evidence="1">Carbohydrate degradation; glycolysis; D-glyceraldehyde 3-phosphate and glycerone phosphate from D-glucose: step 3/4.</text>
</comment>
<comment type="subunit">
    <text evidence="1">Homotetramer.</text>
</comment>
<comment type="subcellular location">
    <subcellularLocation>
        <location evidence="1">Cytoplasm</location>
    </subcellularLocation>
</comment>
<comment type="similarity">
    <text evidence="1">Belongs to the phosphofructokinase type A (PFKA) family. ATP-dependent PFK group I subfamily. Prokaryotic clade 'B1' sub-subfamily.</text>
</comment>
<accession>B7GGT1</accession>
<feature type="chain" id="PRO_1000120026" description="ATP-dependent 6-phosphofructokinase">
    <location>
        <begin position="1"/>
        <end position="319"/>
    </location>
</feature>
<feature type="active site" description="Proton acceptor" evidence="1">
    <location>
        <position position="127"/>
    </location>
</feature>
<feature type="binding site" evidence="1">
    <location>
        <position position="11"/>
    </location>
    <ligand>
        <name>ATP</name>
        <dbReference type="ChEBI" id="CHEBI:30616"/>
    </ligand>
</feature>
<feature type="binding site" evidence="1">
    <location>
        <begin position="21"/>
        <end position="25"/>
    </location>
    <ligand>
        <name>ADP</name>
        <dbReference type="ChEBI" id="CHEBI:456216"/>
        <note>allosteric activator; ligand shared between dimeric partners</note>
    </ligand>
</feature>
<feature type="binding site" evidence="1">
    <location>
        <begin position="72"/>
        <end position="73"/>
    </location>
    <ligand>
        <name>ATP</name>
        <dbReference type="ChEBI" id="CHEBI:30616"/>
    </ligand>
</feature>
<feature type="binding site" evidence="1">
    <location>
        <begin position="102"/>
        <end position="105"/>
    </location>
    <ligand>
        <name>ATP</name>
        <dbReference type="ChEBI" id="CHEBI:30616"/>
    </ligand>
</feature>
<feature type="binding site" evidence="1">
    <location>
        <position position="103"/>
    </location>
    <ligand>
        <name>Mg(2+)</name>
        <dbReference type="ChEBI" id="CHEBI:18420"/>
        <note>catalytic</note>
    </ligand>
</feature>
<feature type="binding site" description="in other chain" evidence="1">
    <location>
        <begin position="125"/>
        <end position="127"/>
    </location>
    <ligand>
        <name>substrate</name>
        <note>ligand shared between dimeric partners</note>
    </ligand>
</feature>
<feature type="binding site" description="in other chain" evidence="1">
    <location>
        <position position="154"/>
    </location>
    <ligand>
        <name>ADP</name>
        <dbReference type="ChEBI" id="CHEBI:456216"/>
        <note>allosteric activator; ligand shared between dimeric partners</note>
    </ligand>
</feature>
<feature type="binding site" evidence="1">
    <location>
        <position position="162"/>
    </location>
    <ligand>
        <name>substrate</name>
        <note>ligand shared between dimeric partners</note>
    </ligand>
</feature>
<feature type="binding site" description="in other chain" evidence="1">
    <location>
        <begin position="169"/>
        <end position="171"/>
    </location>
    <ligand>
        <name>substrate</name>
        <note>ligand shared between dimeric partners</note>
    </ligand>
</feature>
<feature type="binding site" description="in other chain" evidence="1">
    <location>
        <begin position="185"/>
        <end position="187"/>
    </location>
    <ligand>
        <name>ADP</name>
        <dbReference type="ChEBI" id="CHEBI:456216"/>
        <note>allosteric activator; ligand shared between dimeric partners</note>
    </ligand>
</feature>
<feature type="binding site" description="in other chain" evidence="1">
    <location>
        <position position="211"/>
    </location>
    <ligand>
        <name>ADP</name>
        <dbReference type="ChEBI" id="CHEBI:456216"/>
        <note>allosteric activator; ligand shared between dimeric partners</note>
    </ligand>
</feature>
<feature type="binding site" description="in other chain" evidence="1">
    <location>
        <begin position="213"/>
        <end position="215"/>
    </location>
    <ligand>
        <name>ADP</name>
        <dbReference type="ChEBI" id="CHEBI:456216"/>
        <note>allosteric activator; ligand shared between dimeric partners</note>
    </ligand>
</feature>
<feature type="binding site" description="in other chain" evidence="1">
    <location>
        <position position="222"/>
    </location>
    <ligand>
        <name>substrate</name>
        <note>ligand shared between dimeric partners</note>
    </ligand>
</feature>
<feature type="binding site" evidence="1">
    <location>
        <position position="243"/>
    </location>
    <ligand>
        <name>substrate</name>
        <note>ligand shared between dimeric partners</note>
    </ligand>
</feature>
<feature type="binding site" description="in other chain" evidence="1">
    <location>
        <begin position="249"/>
        <end position="252"/>
    </location>
    <ligand>
        <name>substrate</name>
        <note>ligand shared between dimeric partners</note>
    </ligand>
</feature>
<gene>
    <name evidence="1" type="primary">pfkA</name>
    <name type="ordered locus">Aflv_0499</name>
</gene>
<sequence length="319" mass="34174">MKRIGVLTSGGDSPGMNAAIRAVVRKAIYHGLEVYGIYHGYAGLIAGQIKKLEIGDVGDIIHRGGTMLYTARCPEFKTLEGQLKGIEQLKKHGIEGLVVIGGDGSYQGAKKLTEHGYPCVGVPGTIDNDIPGTDFTIGFDTALNTVIDAIDKIRDTATSHERTYVIEVMGRHAGDIALWAGLAGGAESILIPEADYDMDEIVSRLKRGHERGKKHSIIIVAEGVGSGVDFGKRIEEATGLETRVTVLGHVQRGGSPTAFDRVLASRLGARAVELLIEGKGGRCVGIQNNQLVDHDIIEALAQTHTVDQKMYQLSKELSI</sequence>
<reference key="1">
    <citation type="journal article" date="2008" name="Genome Biol.">
        <title>Encapsulated in silica: genome, proteome and physiology of the thermophilic bacterium Anoxybacillus flavithermus WK1.</title>
        <authorList>
            <person name="Saw J.H."/>
            <person name="Mountain B.W."/>
            <person name="Feng L."/>
            <person name="Omelchenko M.V."/>
            <person name="Hou S."/>
            <person name="Saito J.A."/>
            <person name="Stott M.B."/>
            <person name="Li D."/>
            <person name="Zhao G."/>
            <person name="Wu J."/>
            <person name="Galperin M.Y."/>
            <person name="Koonin E.V."/>
            <person name="Makarova K.S."/>
            <person name="Wolf Y.I."/>
            <person name="Rigden D.J."/>
            <person name="Dunfield P.F."/>
            <person name="Wang L."/>
            <person name="Alam M."/>
        </authorList>
    </citation>
    <scope>NUCLEOTIDE SEQUENCE [LARGE SCALE GENOMIC DNA]</scope>
    <source>
        <strain>DSM 21510 / WK1</strain>
    </source>
</reference>
<keyword id="KW-0021">Allosteric enzyme</keyword>
<keyword id="KW-0067">ATP-binding</keyword>
<keyword id="KW-0963">Cytoplasm</keyword>
<keyword id="KW-0324">Glycolysis</keyword>
<keyword id="KW-0418">Kinase</keyword>
<keyword id="KW-0460">Magnesium</keyword>
<keyword id="KW-0479">Metal-binding</keyword>
<keyword id="KW-0547">Nucleotide-binding</keyword>
<keyword id="KW-0808">Transferase</keyword>
<proteinExistence type="inferred from homology"/>